<protein>
    <recommendedName>
        <fullName evidence="1">Glutamyl-tRNA(Gln) amidotransferase subunit D</fullName>
        <shortName evidence="1">Glu-ADT subunit D</shortName>
        <ecNumber evidence="1">6.3.5.-</ecNumber>
    </recommendedName>
</protein>
<sequence>MDIGDFVKLELENTTYSGTVMPSLNEDTVVIKMKSGYNVGIDKKKIKNIEILESGDKPKYGLPPLNLEKNPKLKNISILSTGGTVASRVDYKTGAVHPAFTADDLIRAVPELMDVANIKGKVILNILSENMLPKYWVMTADAIKEEIENGAEGIVIAHGTDTMHYTASALSFMVNSEVPIILVGAQRSSDRPSSDAALNIIAAVKAATEPIKGVYVLMHGETGDTVCHLHEGTKVRKLHSSRRDAFKSVNETPIAEVNPFTKKVTYLREVKSQDRSKIKEVVLNTNLEEKVALIKVYPGIDSEILKFYVDNGYKGIILEGTGLGHTPETFFEGIDYANENNVLVAMTTQTINGRVNMNVYSNGRELQAKGVIPCEDMLSEVAFVKLMHLLGNYEFKEAKELMSKNIAGEINESINLEC</sequence>
<accession>P61400</accession>
<gene>
    <name evidence="1" type="primary">gatD</name>
    <name type="ordered locus">MMP1266</name>
</gene>
<feature type="chain" id="PRO_0000140055" description="Glutamyl-tRNA(Gln) amidotransferase subunit D">
    <location>
        <begin position="1"/>
        <end position="418"/>
    </location>
</feature>
<feature type="domain" description="Asparaginase/glutaminase" evidence="2">
    <location>
        <begin position="74"/>
        <end position="405"/>
    </location>
</feature>
<feature type="active site" evidence="1">
    <location>
        <position position="84"/>
    </location>
</feature>
<feature type="active site" evidence="1">
    <location>
        <position position="160"/>
    </location>
</feature>
<feature type="active site" evidence="1">
    <location>
        <position position="161"/>
    </location>
</feature>
<feature type="active site" evidence="1">
    <location>
        <position position="237"/>
    </location>
</feature>
<dbReference type="EC" id="6.3.5.-" evidence="1"/>
<dbReference type="EMBL" id="BX950229">
    <property type="protein sequence ID" value="CAF30822.1"/>
    <property type="molecule type" value="Genomic_DNA"/>
</dbReference>
<dbReference type="RefSeq" id="WP_011171210.1">
    <property type="nucleotide sequence ID" value="NC_005791.1"/>
</dbReference>
<dbReference type="SMR" id="P61400"/>
<dbReference type="STRING" id="267377.MMP1266"/>
<dbReference type="EnsemblBacteria" id="CAF30822">
    <property type="protein sequence ID" value="CAF30822"/>
    <property type="gene ID" value="MMP1266"/>
</dbReference>
<dbReference type="GeneID" id="2761205"/>
<dbReference type="KEGG" id="mmp:MMP1266"/>
<dbReference type="PATRIC" id="fig|267377.15.peg.1299"/>
<dbReference type="eggNOG" id="arCOG01924">
    <property type="taxonomic scope" value="Archaea"/>
</dbReference>
<dbReference type="HOGENOM" id="CLU_019134_2_1_2"/>
<dbReference type="OrthoDB" id="371959at2157"/>
<dbReference type="Proteomes" id="UP000000590">
    <property type="component" value="Chromosome"/>
</dbReference>
<dbReference type="GO" id="GO:0004067">
    <property type="term" value="F:asparaginase activity"/>
    <property type="evidence" value="ECO:0007669"/>
    <property type="project" value="InterPro"/>
</dbReference>
<dbReference type="GO" id="GO:0005524">
    <property type="term" value="F:ATP binding"/>
    <property type="evidence" value="ECO:0007669"/>
    <property type="project" value="UniProtKB-KW"/>
</dbReference>
<dbReference type="GO" id="GO:0050567">
    <property type="term" value="F:glutaminyl-tRNA synthase (glutamine-hydrolyzing) activity"/>
    <property type="evidence" value="ECO:0007669"/>
    <property type="project" value="UniProtKB-UniRule"/>
</dbReference>
<dbReference type="GO" id="GO:0006520">
    <property type="term" value="P:amino acid metabolic process"/>
    <property type="evidence" value="ECO:0007669"/>
    <property type="project" value="InterPro"/>
</dbReference>
<dbReference type="GO" id="GO:0006450">
    <property type="term" value="P:regulation of translational fidelity"/>
    <property type="evidence" value="ECO:0007669"/>
    <property type="project" value="InterPro"/>
</dbReference>
<dbReference type="GO" id="GO:0006412">
    <property type="term" value="P:translation"/>
    <property type="evidence" value="ECO:0007669"/>
    <property type="project" value="UniProtKB-UniRule"/>
</dbReference>
<dbReference type="CDD" id="cd08962">
    <property type="entry name" value="GatD"/>
    <property type="match status" value="1"/>
</dbReference>
<dbReference type="FunFam" id="3.40.50.1170:FF:000001">
    <property type="entry name" value="L-asparaginase 2"/>
    <property type="match status" value="1"/>
</dbReference>
<dbReference type="Gene3D" id="2.30.30.520">
    <property type="match status" value="1"/>
</dbReference>
<dbReference type="Gene3D" id="3.40.50.40">
    <property type="match status" value="1"/>
</dbReference>
<dbReference type="Gene3D" id="3.40.50.1170">
    <property type="entry name" value="L-asparaginase, N-terminal domain"/>
    <property type="match status" value="1"/>
</dbReference>
<dbReference type="HAMAP" id="MF_00586">
    <property type="entry name" value="GatD"/>
    <property type="match status" value="1"/>
</dbReference>
<dbReference type="InterPro" id="IPR006033">
    <property type="entry name" value="AsnA_fam"/>
</dbReference>
<dbReference type="InterPro" id="IPR036152">
    <property type="entry name" value="Asp/glu_Ase-like_sf"/>
</dbReference>
<dbReference type="InterPro" id="IPR006034">
    <property type="entry name" value="Asparaginase/glutaminase-like"/>
</dbReference>
<dbReference type="InterPro" id="IPR020827">
    <property type="entry name" value="Asparaginase/glutaminase_AS1"/>
</dbReference>
<dbReference type="InterPro" id="IPR027475">
    <property type="entry name" value="Asparaginase/glutaminase_AS2"/>
</dbReference>
<dbReference type="InterPro" id="IPR040919">
    <property type="entry name" value="Asparaginase_C"/>
</dbReference>
<dbReference type="InterPro" id="IPR011878">
    <property type="entry name" value="GatD"/>
</dbReference>
<dbReference type="InterPro" id="IPR040918">
    <property type="entry name" value="GatD_N"/>
</dbReference>
<dbReference type="InterPro" id="IPR037222">
    <property type="entry name" value="GatD_N_sf"/>
</dbReference>
<dbReference type="InterPro" id="IPR027473">
    <property type="entry name" value="L-asparaginase_C"/>
</dbReference>
<dbReference type="InterPro" id="IPR027474">
    <property type="entry name" value="L-asparaginase_N"/>
</dbReference>
<dbReference type="InterPro" id="IPR037152">
    <property type="entry name" value="L-asparaginase_N_sf"/>
</dbReference>
<dbReference type="NCBIfam" id="TIGR00519">
    <property type="entry name" value="asnASE_I"/>
    <property type="match status" value="1"/>
</dbReference>
<dbReference type="NCBIfam" id="TIGR02153">
    <property type="entry name" value="gatD_arch"/>
    <property type="match status" value="1"/>
</dbReference>
<dbReference type="NCBIfam" id="NF003217">
    <property type="entry name" value="PRK04183.1"/>
    <property type="match status" value="1"/>
</dbReference>
<dbReference type="PANTHER" id="PTHR11707:SF28">
    <property type="entry name" value="60 KDA LYSOPHOSPHOLIPASE"/>
    <property type="match status" value="1"/>
</dbReference>
<dbReference type="PANTHER" id="PTHR11707">
    <property type="entry name" value="L-ASPARAGINASE"/>
    <property type="match status" value="1"/>
</dbReference>
<dbReference type="Pfam" id="PF00710">
    <property type="entry name" value="Asparaginase"/>
    <property type="match status" value="1"/>
</dbReference>
<dbReference type="Pfam" id="PF17763">
    <property type="entry name" value="Asparaginase_C"/>
    <property type="match status" value="1"/>
</dbReference>
<dbReference type="Pfam" id="PF18195">
    <property type="entry name" value="GatD_N"/>
    <property type="match status" value="1"/>
</dbReference>
<dbReference type="PIRSF" id="PIRSF500175">
    <property type="entry name" value="Glu_ADT_D"/>
    <property type="match status" value="1"/>
</dbReference>
<dbReference type="PIRSF" id="PIRSF001220">
    <property type="entry name" value="L-ASNase_gatD"/>
    <property type="match status" value="1"/>
</dbReference>
<dbReference type="PRINTS" id="PR00139">
    <property type="entry name" value="ASNGLNASE"/>
</dbReference>
<dbReference type="SMART" id="SM00870">
    <property type="entry name" value="Asparaginase"/>
    <property type="match status" value="1"/>
</dbReference>
<dbReference type="SUPFAM" id="SSF141300">
    <property type="entry name" value="GatD N-terminal domain-like"/>
    <property type="match status" value="1"/>
</dbReference>
<dbReference type="SUPFAM" id="SSF53774">
    <property type="entry name" value="Glutaminase/Asparaginase"/>
    <property type="match status" value="1"/>
</dbReference>
<dbReference type="PROSITE" id="PS00144">
    <property type="entry name" value="ASN_GLN_ASE_1"/>
    <property type="match status" value="1"/>
</dbReference>
<dbReference type="PROSITE" id="PS00917">
    <property type="entry name" value="ASN_GLN_ASE_2"/>
    <property type="match status" value="1"/>
</dbReference>
<dbReference type="PROSITE" id="PS51732">
    <property type="entry name" value="ASN_GLN_ASE_3"/>
    <property type="match status" value="1"/>
</dbReference>
<keyword id="KW-0067">ATP-binding</keyword>
<keyword id="KW-0436">Ligase</keyword>
<keyword id="KW-0547">Nucleotide-binding</keyword>
<keyword id="KW-0648">Protein biosynthesis</keyword>
<keyword id="KW-1185">Reference proteome</keyword>
<reference key="1">
    <citation type="journal article" date="2004" name="J. Bacteriol.">
        <title>Complete genome sequence of the genetically tractable hydrogenotrophic methanogen Methanococcus maripaludis.</title>
        <authorList>
            <person name="Hendrickson E.L."/>
            <person name="Kaul R."/>
            <person name="Zhou Y."/>
            <person name="Bovee D."/>
            <person name="Chapman P."/>
            <person name="Chung J."/>
            <person name="Conway de Macario E."/>
            <person name="Dodsworth J.A."/>
            <person name="Gillett W."/>
            <person name="Graham D.E."/>
            <person name="Hackett M."/>
            <person name="Haydock A.K."/>
            <person name="Kang A."/>
            <person name="Land M.L."/>
            <person name="Levy R."/>
            <person name="Lie T.J."/>
            <person name="Major T.A."/>
            <person name="Moore B.C."/>
            <person name="Porat I."/>
            <person name="Palmeiri A."/>
            <person name="Rouse G."/>
            <person name="Saenphimmachak C."/>
            <person name="Soell D."/>
            <person name="Van Dien S."/>
            <person name="Wang T."/>
            <person name="Whitman W.B."/>
            <person name="Xia Q."/>
            <person name="Zhang Y."/>
            <person name="Larimer F.W."/>
            <person name="Olson M.V."/>
            <person name="Leigh J.A."/>
        </authorList>
    </citation>
    <scope>NUCLEOTIDE SEQUENCE [LARGE SCALE GENOMIC DNA]</scope>
    <source>
        <strain>DSM 14266 / JCM 13030 / NBRC 101832 / S2 / LL</strain>
    </source>
</reference>
<evidence type="ECO:0000255" key="1">
    <source>
        <dbReference type="HAMAP-Rule" id="MF_00586"/>
    </source>
</evidence>
<evidence type="ECO:0000255" key="2">
    <source>
        <dbReference type="PROSITE-ProRule" id="PRU01068"/>
    </source>
</evidence>
<name>GATD_METMP</name>
<proteinExistence type="inferred from homology"/>
<comment type="function">
    <text evidence="1">Allows the formation of correctly charged Gln-tRNA(Gln) through the transamidation of misacylated Glu-tRNA(Gln) in organisms which lack glutaminyl-tRNA synthetase. The reaction takes place in the presence of glutamine and ATP through an activated gamma-phospho-Glu-tRNA(Gln). The GatDE system is specific for glutamate and does not act on aspartate.</text>
</comment>
<comment type="catalytic activity">
    <reaction evidence="1">
        <text>L-glutamyl-tRNA(Gln) + L-glutamine + ATP + H2O = L-glutaminyl-tRNA(Gln) + L-glutamate + ADP + phosphate + H(+)</text>
        <dbReference type="Rhea" id="RHEA:17521"/>
        <dbReference type="Rhea" id="RHEA-COMP:9681"/>
        <dbReference type="Rhea" id="RHEA-COMP:9684"/>
        <dbReference type="ChEBI" id="CHEBI:15377"/>
        <dbReference type="ChEBI" id="CHEBI:15378"/>
        <dbReference type="ChEBI" id="CHEBI:29985"/>
        <dbReference type="ChEBI" id="CHEBI:30616"/>
        <dbReference type="ChEBI" id="CHEBI:43474"/>
        <dbReference type="ChEBI" id="CHEBI:58359"/>
        <dbReference type="ChEBI" id="CHEBI:78520"/>
        <dbReference type="ChEBI" id="CHEBI:78521"/>
        <dbReference type="ChEBI" id="CHEBI:456216"/>
    </reaction>
</comment>
<comment type="subunit">
    <text evidence="1">Heterodimer of GatD and GatE.</text>
</comment>
<comment type="similarity">
    <text evidence="1">Belongs to the asparaginase 1 family. GatD subfamily.</text>
</comment>
<organism>
    <name type="scientific">Methanococcus maripaludis (strain DSM 14266 / JCM 13030 / NBRC 101832 / S2 / LL)</name>
    <dbReference type="NCBI Taxonomy" id="267377"/>
    <lineage>
        <taxon>Archaea</taxon>
        <taxon>Methanobacteriati</taxon>
        <taxon>Methanobacteriota</taxon>
        <taxon>Methanomada group</taxon>
        <taxon>Methanococci</taxon>
        <taxon>Methanococcales</taxon>
        <taxon>Methanococcaceae</taxon>
        <taxon>Methanococcus</taxon>
    </lineage>
</organism>